<sequence length="584" mass="66760">MGQNQFRWSNEQLREHVEIIDGTRSPHKLLKNATYLNSYIREWMQANIWIYDDRIIYVGEKLPEQLHECEVIDCDGKYVVPSYIEPHAHPYQLYNPETLANHAMQFGTTTFINDNLTLFFTLKREESFHLLDEFTKIPASMYWWCRFDGQTELQNGESLFNSEEIIKWLQHEAVLQGGELTAWPKLLHGDDEMLTWVQETKRLQKKVEGHFPGASEATLAKLKLLGTDCDHEAMTGQEALARLMQGYTVSLRNSSIRPDLEVLLKELLELGVKQFDRFIFTTDGSHPSFYENGMTNIMIATAIKKGIPVIDAYQMASYNIARYYNMEHIHGAIATGRIANINILESKENPVPTSVIAKGQWVKRDGVNTHEALHIDWSKCKVTPLSLEWSIEKEDMLFSNKTGIHLLNNVITKPYTSEINIDCDELSIDYDECFLMMIARDGTWRVNTVVKGFAKEIGGLASSYSGTGDIILVGKRKEDMLTAFHRIKELGGGMVIAEKNEVLHEIALPLLGIMSELKMSELIQKEKKMVNLLQERGYVYNDPAFTILFFSATHLPFIRVTFIGLYDVKSGKVVASPVNLIKQY</sequence>
<proteinExistence type="inferred from homology"/>
<gene>
    <name type="ordered locus">BA_3032</name>
    <name type="ordered locus">GBAA_3032</name>
    <name type="ordered locus">BAS2818</name>
</gene>
<reference key="1">
    <citation type="journal article" date="2003" name="Nature">
        <title>The genome sequence of Bacillus anthracis Ames and comparison to closely related bacteria.</title>
        <authorList>
            <person name="Read T.D."/>
            <person name="Peterson S.N."/>
            <person name="Tourasse N.J."/>
            <person name="Baillie L.W."/>
            <person name="Paulsen I.T."/>
            <person name="Nelson K.E."/>
            <person name="Tettelin H."/>
            <person name="Fouts D.E."/>
            <person name="Eisen J.A."/>
            <person name="Gill S.R."/>
            <person name="Holtzapple E.K."/>
            <person name="Okstad O.A."/>
            <person name="Helgason E."/>
            <person name="Rilstone J."/>
            <person name="Wu M."/>
            <person name="Kolonay J.F."/>
            <person name="Beanan M.J."/>
            <person name="Dodson R.J."/>
            <person name="Brinkac L.M."/>
            <person name="Gwinn M.L."/>
            <person name="DeBoy R.T."/>
            <person name="Madpu R."/>
            <person name="Daugherty S.C."/>
            <person name="Durkin A.S."/>
            <person name="Haft D.H."/>
            <person name="Nelson W.C."/>
            <person name="Peterson J.D."/>
            <person name="Pop M."/>
            <person name="Khouri H.M."/>
            <person name="Radune D."/>
            <person name="Benton J.L."/>
            <person name="Mahamoud Y."/>
            <person name="Jiang L."/>
            <person name="Hance I.R."/>
            <person name="Weidman J.F."/>
            <person name="Berry K.J."/>
            <person name="Plaut R.D."/>
            <person name="Wolf A.M."/>
            <person name="Watkins K.L."/>
            <person name="Nierman W.C."/>
            <person name="Hazen A."/>
            <person name="Cline R.T."/>
            <person name="Redmond C."/>
            <person name="Thwaite J.E."/>
            <person name="White O."/>
            <person name="Salzberg S.L."/>
            <person name="Thomason B."/>
            <person name="Friedlander A.M."/>
            <person name="Koehler T.M."/>
            <person name="Hanna P.C."/>
            <person name="Kolstoe A.-B."/>
            <person name="Fraser C.M."/>
        </authorList>
    </citation>
    <scope>NUCLEOTIDE SEQUENCE [LARGE SCALE GENOMIC DNA]</scope>
    <source>
        <strain>Ames / isolate Porton</strain>
    </source>
</reference>
<reference key="2">
    <citation type="journal article" date="2009" name="J. Bacteriol.">
        <title>The complete genome sequence of Bacillus anthracis Ames 'Ancestor'.</title>
        <authorList>
            <person name="Ravel J."/>
            <person name="Jiang L."/>
            <person name="Stanley S.T."/>
            <person name="Wilson M.R."/>
            <person name="Decker R.S."/>
            <person name="Read T.D."/>
            <person name="Worsham P."/>
            <person name="Keim P.S."/>
            <person name="Salzberg S.L."/>
            <person name="Fraser-Liggett C.M."/>
            <person name="Rasko D.A."/>
        </authorList>
    </citation>
    <scope>NUCLEOTIDE SEQUENCE [LARGE SCALE GENOMIC DNA]</scope>
    <source>
        <strain>Ames ancestor</strain>
    </source>
</reference>
<reference key="3">
    <citation type="submission" date="2004-01" db="EMBL/GenBank/DDBJ databases">
        <title>Complete genome sequence of Bacillus anthracis Sterne.</title>
        <authorList>
            <person name="Brettin T.S."/>
            <person name="Bruce D."/>
            <person name="Challacombe J.F."/>
            <person name="Gilna P."/>
            <person name="Han C."/>
            <person name="Hill K."/>
            <person name="Hitchcock P."/>
            <person name="Jackson P."/>
            <person name="Keim P."/>
            <person name="Longmire J."/>
            <person name="Lucas S."/>
            <person name="Okinaka R."/>
            <person name="Richardson P."/>
            <person name="Rubin E."/>
            <person name="Tice H."/>
        </authorList>
    </citation>
    <scope>NUCLEOTIDE SEQUENCE [LARGE SCALE GENOMIC DNA]</scope>
    <source>
        <strain>Sterne</strain>
    </source>
</reference>
<accession>Q6HX62</accession>
<accession>Q6KR89</accession>
<accession>Q81NY9</accession>
<evidence type="ECO:0000305" key="1"/>
<organism>
    <name type="scientific">Bacillus anthracis</name>
    <dbReference type="NCBI Taxonomy" id="1392"/>
    <lineage>
        <taxon>Bacteria</taxon>
        <taxon>Bacillati</taxon>
        <taxon>Bacillota</taxon>
        <taxon>Bacilli</taxon>
        <taxon>Bacillales</taxon>
        <taxon>Bacillaceae</taxon>
        <taxon>Bacillus</taxon>
        <taxon>Bacillus cereus group</taxon>
    </lineage>
</organism>
<name>Y3032_BACAN</name>
<feature type="chain" id="PRO_0000142444" description="Putative adenine deaminase BA_3032/GBAA_3032/BAS2818">
    <location>
        <begin position="1"/>
        <end position="584"/>
    </location>
</feature>
<dbReference type="EC" id="3.5.4.2"/>
<dbReference type="EMBL" id="AE016879">
    <property type="protein sequence ID" value="AAP26849.1"/>
    <property type="molecule type" value="Genomic_DNA"/>
</dbReference>
<dbReference type="EMBL" id="AE017334">
    <property type="protein sequence ID" value="AAT32147.1"/>
    <property type="molecule type" value="Genomic_DNA"/>
</dbReference>
<dbReference type="EMBL" id="AE017225">
    <property type="protein sequence ID" value="AAT55127.1"/>
    <property type="molecule type" value="Genomic_DNA"/>
</dbReference>
<dbReference type="RefSeq" id="NP_845363.1">
    <property type="nucleotide sequence ID" value="NC_003997.3"/>
</dbReference>
<dbReference type="RefSeq" id="WP_000531401.1">
    <property type="nucleotide sequence ID" value="NZ_WXXJ01000029.1"/>
</dbReference>
<dbReference type="RefSeq" id="YP_029076.1">
    <property type="nucleotide sequence ID" value="NC_005945.1"/>
</dbReference>
<dbReference type="SMR" id="Q6HX62"/>
<dbReference type="STRING" id="261594.GBAA_3032"/>
<dbReference type="DNASU" id="1088144"/>
<dbReference type="GeneID" id="45022842"/>
<dbReference type="KEGG" id="ban:BA_3032"/>
<dbReference type="KEGG" id="bar:GBAA_3032"/>
<dbReference type="KEGG" id="bat:BAS2818"/>
<dbReference type="PATRIC" id="fig|198094.11.peg.3012"/>
<dbReference type="eggNOG" id="COG1001">
    <property type="taxonomic scope" value="Bacteria"/>
</dbReference>
<dbReference type="HOGENOM" id="CLU_027935_0_0_9"/>
<dbReference type="OMA" id="DLQFSMP"/>
<dbReference type="OrthoDB" id="9775607at2"/>
<dbReference type="Proteomes" id="UP000000427">
    <property type="component" value="Chromosome"/>
</dbReference>
<dbReference type="Proteomes" id="UP000000594">
    <property type="component" value="Chromosome"/>
</dbReference>
<dbReference type="GO" id="GO:0000034">
    <property type="term" value="F:adenine deaminase activity"/>
    <property type="evidence" value="ECO:0007669"/>
    <property type="project" value="UniProtKB-EC"/>
</dbReference>
<dbReference type="FunFam" id="3.20.20.140:FF:000067">
    <property type="entry name" value="Adenine deaminase"/>
    <property type="match status" value="1"/>
</dbReference>
<dbReference type="Gene3D" id="3.20.20.140">
    <property type="entry name" value="Metal-dependent hydrolases"/>
    <property type="match status" value="1"/>
</dbReference>
<dbReference type="Gene3D" id="2.30.40.10">
    <property type="entry name" value="Urease, subunit C, domain 1"/>
    <property type="match status" value="1"/>
</dbReference>
<dbReference type="InterPro" id="IPR026912">
    <property type="entry name" value="Adenine_deam_C"/>
</dbReference>
<dbReference type="InterPro" id="IPR006680">
    <property type="entry name" value="Amidohydro-rel"/>
</dbReference>
<dbReference type="InterPro" id="IPR011059">
    <property type="entry name" value="Metal-dep_hydrolase_composite"/>
</dbReference>
<dbReference type="InterPro" id="IPR032466">
    <property type="entry name" value="Metal_Hydrolase"/>
</dbReference>
<dbReference type="PANTHER" id="PTHR11113:SF6">
    <property type="entry name" value="ADENINE DEAMINASE YERA-RELATED"/>
    <property type="match status" value="1"/>
</dbReference>
<dbReference type="PANTHER" id="PTHR11113">
    <property type="entry name" value="N-ACETYLGLUCOSAMINE-6-PHOSPHATE DEACETYLASE"/>
    <property type="match status" value="1"/>
</dbReference>
<dbReference type="Pfam" id="PF13382">
    <property type="entry name" value="Adenine_deam_C"/>
    <property type="match status" value="1"/>
</dbReference>
<dbReference type="Pfam" id="PF01979">
    <property type="entry name" value="Amidohydro_1"/>
    <property type="match status" value="1"/>
</dbReference>
<dbReference type="SUPFAM" id="SSF51338">
    <property type="entry name" value="Composite domain of metallo-dependent hydrolases"/>
    <property type="match status" value="1"/>
</dbReference>
<dbReference type="SUPFAM" id="SSF51556">
    <property type="entry name" value="Metallo-dependent hydrolases"/>
    <property type="match status" value="1"/>
</dbReference>
<comment type="catalytic activity">
    <reaction>
        <text>adenine + H2O + H(+) = hypoxanthine + NH4(+)</text>
        <dbReference type="Rhea" id="RHEA:23688"/>
        <dbReference type="ChEBI" id="CHEBI:15377"/>
        <dbReference type="ChEBI" id="CHEBI:15378"/>
        <dbReference type="ChEBI" id="CHEBI:16708"/>
        <dbReference type="ChEBI" id="CHEBI:17368"/>
        <dbReference type="ChEBI" id="CHEBI:28938"/>
        <dbReference type="EC" id="3.5.4.2"/>
    </reaction>
</comment>
<comment type="similarity">
    <text evidence="1">Belongs to the metallo-dependent hydrolases superfamily. Adenine deaminase family.</text>
</comment>
<protein>
    <recommendedName>
        <fullName>Putative adenine deaminase BA_3032/GBAA_3032/BAS2818</fullName>
        <shortName>Adenase</shortName>
        <shortName>Adenine aminase</shortName>
        <ecNumber>3.5.4.2</ecNumber>
    </recommendedName>
</protein>
<keyword id="KW-0378">Hydrolase</keyword>
<keyword id="KW-1185">Reference proteome</keyword>